<feature type="chain" id="PRO_1000058376" description="GTP cyclohydrolase-2">
    <location>
        <begin position="1"/>
        <end position="196"/>
    </location>
</feature>
<feature type="active site" description="Proton acceptor" evidence="1">
    <location>
        <position position="126"/>
    </location>
</feature>
<feature type="active site" description="Nucleophile" evidence="1">
    <location>
        <position position="128"/>
    </location>
</feature>
<feature type="binding site" evidence="1">
    <location>
        <begin position="49"/>
        <end position="53"/>
    </location>
    <ligand>
        <name>GTP</name>
        <dbReference type="ChEBI" id="CHEBI:37565"/>
    </ligand>
</feature>
<feature type="binding site" evidence="1">
    <location>
        <position position="54"/>
    </location>
    <ligand>
        <name>Zn(2+)</name>
        <dbReference type="ChEBI" id="CHEBI:29105"/>
        <note>catalytic</note>
    </ligand>
</feature>
<feature type="binding site" evidence="1">
    <location>
        <position position="65"/>
    </location>
    <ligand>
        <name>Zn(2+)</name>
        <dbReference type="ChEBI" id="CHEBI:29105"/>
        <note>catalytic</note>
    </ligand>
</feature>
<feature type="binding site" evidence="1">
    <location>
        <position position="67"/>
    </location>
    <ligand>
        <name>Zn(2+)</name>
        <dbReference type="ChEBI" id="CHEBI:29105"/>
        <note>catalytic</note>
    </ligand>
</feature>
<feature type="binding site" evidence="1">
    <location>
        <position position="70"/>
    </location>
    <ligand>
        <name>GTP</name>
        <dbReference type="ChEBI" id="CHEBI:37565"/>
    </ligand>
</feature>
<feature type="binding site" evidence="1">
    <location>
        <begin position="92"/>
        <end position="94"/>
    </location>
    <ligand>
        <name>GTP</name>
        <dbReference type="ChEBI" id="CHEBI:37565"/>
    </ligand>
</feature>
<feature type="binding site" evidence="1">
    <location>
        <position position="114"/>
    </location>
    <ligand>
        <name>GTP</name>
        <dbReference type="ChEBI" id="CHEBI:37565"/>
    </ligand>
</feature>
<feature type="binding site" evidence="1">
    <location>
        <position position="149"/>
    </location>
    <ligand>
        <name>GTP</name>
        <dbReference type="ChEBI" id="CHEBI:37565"/>
    </ligand>
</feature>
<feature type="binding site" evidence="1">
    <location>
        <position position="154"/>
    </location>
    <ligand>
        <name>GTP</name>
        <dbReference type="ChEBI" id="CHEBI:37565"/>
    </ligand>
</feature>
<organism>
    <name type="scientific">Escherichia coli O9:H4 (strain HS)</name>
    <dbReference type="NCBI Taxonomy" id="331112"/>
    <lineage>
        <taxon>Bacteria</taxon>
        <taxon>Pseudomonadati</taxon>
        <taxon>Pseudomonadota</taxon>
        <taxon>Gammaproteobacteria</taxon>
        <taxon>Enterobacterales</taxon>
        <taxon>Enterobacteriaceae</taxon>
        <taxon>Escherichia</taxon>
    </lineage>
</organism>
<proteinExistence type="inferred from homology"/>
<accession>A7ZZL5</accession>
<gene>
    <name evidence="1" type="primary">ribA</name>
    <name type="ordered locus">EcHS_A1388</name>
</gene>
<keyword id="KW-0342">GTP-binding</keyword>
<keyword id="KW-0378">Hydrolase</keyword>
<keyword id="KW-0479">Metal-binding</keyword>
<keyword id="KW-0547">Nucleotide-binding</keyword>
<keyword id="KW-0686">Riboflavin biosynthesis</keyword>
<keyword id="KW-0862">Zinc</keyword>
<name>RIBA_ECOHS</name>
<comment type="function">
    <text evidence="1">Catalyzes the conversion of GTP to 2,5-diamino-6-ribosylamino-4(3H)-pyrimidinone 5'-phosphate (DARP), formate and pyrophosphate.</text>
</comment>
<comment type="catalytic activity">
    <reaction evidence="1">
        <text>GTP + 4 H2O = 2,5-diamino-6-hydroxy-4-(5-phosphoribosylamino)-pyrimidine + formate + 2 phosphate + 3 H(+)</text>
        <dbReference type="Rhea" id="RHEA:23704"/>
        <dbReference type="ChEBI" id="CHEBI:15377"/>
        <dbReference type="ChEBI" id="CHEBI:15378"/>
        <dbReference type="ChEBI" id="CHEBI:15740"/>
        <dbReference type="ChEBI" id="CHEBI:37565"/>
        <dbReference type="ChEBI" id="CHEBI:43474"/>
        <dbReference type="ChEBI" id="CHEBI:58614"/>
        <dbReference type="EC" id="3.5.4.25"/>
    </reaction>
</comment>
<comment type="cofactor">
    <cofactor evidence="1">
        <name>Zn(2+)</name>
        <dbReference type="ChEBI" id="CHEBI:29105"/>
    </cofactor>
    <text evidence="1">Binds 1 zinc ion per subunit.</text>
</comment>
<comment type="pathway">
    <text evidence="1">Cofactor biosynthesis; riboflavin biosynthesis; 5-amino-6-(D-ribitylamino)uracil from GTP: step 1/4.</text>
</comment>
<comment type="subunit">
    <text evidence="1">Homodimer.</text>
</comment>
<comment type="similarity">
    <text evidence="1">Belongs to the GTP cyclohydrolase II family.</text>
</comment>
<reference key="1">
    <citation type="journal article" date="2008" name="J. Bacteriol.">
        <title>The pangenome structure of Escherichia coli: comparative genomic analysis of E. coli commensal and pathogenic isolates.</title>
        <authorList>
            <person name="Rasko D.A."/>
            <person name="Rosovitz M.J."/>
            <person name="Myers G.S.A."/>
            <person name="Mongodin E.F."/>
            <person name="Fricke W.F."/>
            <person name="Gajer P."/>
            <person name="Crabtree J."/>
            <person name="Sebaihia M."/>
            <person name="Thomson N.R."/>
            <person name="Chaudhuri R."/>
            <person name="Henderson I.R."/>
            <person name="Sperandio V."/>
            <person name="Ravel J."/>
        </authorList>
    </citation>
    <scope>NUCLEOTIDE SEQUENCE [LARGE SCALE GENOMIC DNA]</scope>
    <source>
        <strain>HS</strain>
    </source>
</reference>
<evidence type="ECO:0000255" key="1">
    <source>
        <dbReference type="HAMAP-Rule" id="MF_00179"/>
    </source>
</evidence>
<sequence>MQLKRVAEAKLPTPWGDFLMVGFEELATGHDHVALVYGDISGHTPVLARVHSECLTGDALFSLRCDCGFQLEAALTQIAEEGRGILLYHRQEGRNIGLLNKIRAYALQDQGYDTVEANHQLGFAADERDFTLCADMFKLLGVNEVRLLTNNPKKVEILTEAGINIVERVPLIVGRNPNNEHYLDTKAEKMGHLLNK</sequence>
<dbReference type="EC" id="3.5.4.25" evidence="1"/>
<dbReference type="EMBL" id="CP000802">
    <property type="protein sequence ID" value="ABV05719.1"/>
    <property type="molecule type" value="Genomic_DNA"/>
</dbReference>
<dbReference type="RefSeq" id="WP_001176295.1">
    <property type="nucleotide sequence ID" value="NC_009800.1"/>
</dbReference>
<dbReference type="SMR" id="A7ZZL5"/>
<dbReference type="GeneID" id="86946614"/>
<dbReference type="KEGG" id="ecx:EcHS_A1388"/>
<dbReference type="HOGENOM" id="CLU_020273_2_1_6"/>
<dbReference type="UniPathway" id="UPA00275">
    <property type="reaction ID" value="UER00400"/>
</dbReference>
<dbReference type="GO" id="GO:0005829">
    <property type="term" value="C:cytosol"/>
    <property type="evidence" value="ECO:0007669"/>
    <property type="project" value="TreeGrafter"/>
</dbReference>
<dbReference type="GO" id="GO:0005525">
    <property type="term" value="F:GTP binding"/>
    <property type="evidence" value="ECO:0007669"/>
    <property type="project" value="UniProtKB-KW"/>
</dbReference>
<dbReference type="GO" id="GO:0003935">
    <property type="term" value="F:GTP cyclohydrolase II activity"/>
    <property type="evidence" value="ECO:0007669"/>
    <property type="project" value="UniProtKB-UniRule"/>
</dbReference>
<dbReference type="GO" id="GO:0008270">
    <property type="term" value="F:zinc ion binding"/>
    <property type="evidence" value="ECO:0007669"/>
    <property type="project" value="UniProtKB-UniRule"/>
</dbReference>
<dbReference type="GO" id="GO:0009231">
    <property type="term" value="P:riboflavin biosynthetic process"/>
    <property type="evidence" value="ECO:0007669"/>
    <property type="project" value="UniProtKB-UniRule"/>
</dbReference>
<dbReference type="CDD" id="cd00641">
    <property type="entry name" value="GTP_cyclohydro2"/>
    <property type="match status" value="1"/>
</dbReference>
<dbReference type="FunFam" id="3.40.50.10990:FF:000002">
    <property type="entry name" value="GTP cyclohydrolase-2"/>
    <property type="match status" value="1"/>
</dbReference>
<dbReference type="Gene3D" id="3.40.50.10990">
    <property type="entry name" value="GTP cyclohydrolase II"/>
    <property type="match status" value="1"/>
</dbReference>
<dbReference type="HAMAP" id="MF_00179">
    <property type="entry name" value="RibA"/>
    <property type="match status" value="1"/>
</dbReference>
<dbReference type="InterPro" id="IPR032677">
    <property type="entry name" value="GTP_cyclohydro_II"/>
</dbReference>
<dbReference type="InterPro" id="IPR000926">
    <property type="entry name" value="RibA"/>
</dbReference>
<dbReference type="InterPro" id="IPR036144">
    <property type="entry name" value="RibA-like_sf"/>
</dbReference>
<dbReference type="NCBIfam" id="NF001591">
    <property type="entry name" value="PRK00393.1"/>
    <property type="match status" value="1"/>
</dbReference>
<dbReference type="NCBIfam" id="TIGR00505">
    <property type="entry name" value="ribA"/>
    <property type="match status" value="1"/>
</dbReference>
<dbReference type="PANTHER" id="PTHR21327:SF18">
    <property type="entry name" value="3,4-DIHYDROXY-2-BUTANONE 4-PHOSPHATE SYNTHASE"/>
    <property type="match status" value="1"/>
</dbReference>
<dbReference type="PANTHER" id="PTHR21327">
    <property type="entry name" value="GTP CYCLOHYDROLASE II-RELATED"/>
    <property type="match status" value="1"/>
</dbReference>
<dbReference type="Pfam" id="PF00925">
    <property type="entry name" value="GTP_cyclohydro2"/>
    <property type="match status" value="1"/>
</dbReference>
<dbReference type="SUPFAM" id="SSF142695">
    <property type="entry name" value="RibA-like"/>
    <property type="match status" value="1"/>
</dbReference>
<protein>
    <recommendedName>
        <fullName evidence="1">GTP cyclohydrolase-2</fullName>
        <ecNumber evidence="1">3.5.4.25</ecNumber>
    </recommendedName>
    <alternativeName>
        <fullName evidence="1">GTP cyclohydrolase II</fullName>
    </alternativeName>
</protein>